<reference key="1">
    <citation type="journal article" date="2007" name="Biochem. J.">
        <title>Antimicrobial activity of omwaprin, a new member of the waprin family of snake venom proteins.</title>
        <authorList>
            <person name="Nair D.G."/>
            <person name="Fry B.G."/>
            <person name="Alewood P.F."/>
            <person name="Kumar P.P."/>
            <person name="Kini R.M."/>
        </authorList>
    </citation>
    <scope>PROTEIN SEQUENCE</scope>
    <scope>FUNCTION</scope>
    <scope>SUBCELLULAR LOCATION</scope>
    <scope>MASS SPECTROMETRY</scope>
    <scope>DISULFIDE BONDS</scope>
    <source>
        <tissue>Venom</tissue>
    </source>
</reference>
<reference key="2">
    <citation type="journal article" date="2010" name="Protein Sci.">
        <title>Determination of the X-ray structure of the snake venom protein omwaprin by total chemical synthesis and racemic protein crystallography.</title>
        <authorList>
            <person name="Banigan J.R."/>
            <person name="Mandal K."/>
            <person name="Sawaya M.R."/>
            <person name="Thammavongsa V."/>
            <person name="Hendrickx A.P."/>
            <person name="Schneewind O."/>
            <person name="Yeates T.O."/>
            <person name="Kent S.B."/>
        </authorList>
    </citation>
    <scope>X-RAY CRYSTALLOGRAPHY (1.33 ANGSTROMS) OF RACEMIC MIXTURE OF BOTH L-OMWAPRIN AND D-OMWAPRIN</scope>
    <scope>DISULFIDE BOND</scope>
    <scope>SYNTHESIS OF L-OMWAPRIN AND D-OMWAPRIN</scope>
</reference>
<comment type="function">
    <text evidence="4">Damages membranes of susceptible bacteria (PubMed:17044815). Has antibacterial activity against the Gram-positive bacteria B.megaterium and S.warneri (PubMed:17044815, PubMed:20669184). After a 45-minute treatment with this protein, B.megaterium have no visible pili and are smooth (PubMed:20669184). Has no antibacterial activity against the Gram-positive bacteria B.thuringiensis, S.aureus, S.clavuligerus and B.anthracis, or the Gram-negative bacteria E.coli and A.tumefaciens (PubMed:17044815, PubMed:20669184). Has no hemolytic activity (PubMed:17044815). Does not inhibit the proteinases elastase and cathepsin G (PubMed:17044815). Is not toxic to mice (PubMed:17044815).</text>
</comment>
<comment type="subcellular location">
    <subcellularLocation>
        <location evidence="4">Secreted</location>
    </subcellularLocation>
</comment>
<comment type="tissue specificity">
    <text evidence="9">Expressed by the venom gland.</text>
</comment>
<comment type="mass spectrometry"/>
<comment type="miscellaneous">
    <text evidence="5">A D-omwaprin has been synthesized to permit cristallization by using a racemic mixture containing equal amounts of L- and D-omwaprin. This D-omwaprin provokes B.megaterium lysis (after 45 minutes of treatment), but fails to inhibit growth of B.anthracis.</text>
</comment>
<comment type="similarity">
    <text evidence="8">Belongs to the venom waprin family.</text>
</comment>
<proteinExistence type="evidence at protein level"/>
<sequence>KDRPKKPGLCPPRPQKPCVKECKNDDSCPGQQKCCNYGCKDECRDPIFVG</sequence>
<evidence type="ECO:0000250" key="1">
    <source>
        <dbReference type="UniProtKB" id="B5G6G7"/>
    </source>
</evidence>
<evidence type="ECO:0000250" key="2">
    <source>
        <dbReference type="UniProtKB" id="B5L5M9"/>
    </source>
</evidence>
<evidence type="ECO:0000255" key="3">
    <source>
        <dbReference type="PROSITE-ProRule" id="PRU00722"/>
    </source>
</evidence>
<evidence type="ECO:0000269" key="4">
    <source>
    </source>
</evidence>
<evidence type="ECO:0000269" key="5">
    <source>
    </source>
</evidence>
<evidence type="ECO:0000303" key="6">
    <source>
    </source>
</evidence>
<evidence type="ECO:0000303" key="7">
    <source>
    </source>
</evidence>
<evidence type="ECO:0000305" key="8"/>
<evidence type="ECO:0000305" key="9">
    <source>
    </source>
</evidence>
<evidence type="ECO:0000312" key="10">
    <source>
        <dbReference type="PDB" id="3NGG"/>
    </source>
</evidence>
<evidence type="ECO:0007829" key="11">
    <source>
        <dbReference type="PDB" id="3NGG"/>
    </source>
</evidence>
<keyword id="KW-0002">3D-structure</keyword>
<keyword id="KW-0044">Antibiotic</keyword>
<keyword id="KW-0929">Antimicrobial</keyword>
<keyword id="KW-0903">Direct protein sequencing</keyword>
<keyword id="KW-1015">Disulfide bond</keyword>
<keyword id="KW-0964">Secreted</keyword>
<organism>
    <name type="scientific">Oxyuranus microlepidotus</name>
    <name type="common">Inland taipan</name>
    <name type="synonym">Diemenia microlepidota</name>
    <dbReference type="NCBI Taxonomy" id="111177"/>
    <lineage>
        <taxon>Eukaryota</taxon>
        <taxon>Metazoa</taxon>
        <taxon>Chordata</taxon>
        <taxon>Craniata</taxon>
        <taxon>Vertebrata</taxon>
        <taxon>Euteleostomi</taxon>
        <taxon>Lepidosauria</taxon>
        <taxon>Squamata</taxon>
        <taxon>Bifurcata</taxon>
        <taxon>Unidentata</taxon>
        <taxon>Episquamata</taxon>
        <taxon>Toxicofera</taxon>
        <taxon>Serpentes</taxon>
        <taxon>Colubroidea</taxon>
        <taxon>Elapidae</taxon>
        <taxon>Hydrophiinae</taxon>
        <taxon>Oxyuranus</taxon>
    </lineage>
</organism>
<feature type="chain" id="PRO_0000188989" description="Omwaprin-a" evidence="4">
    <location>
        <begin position="1"/>
        <end position="50"/>
    </location>
</feature>
<feature type="domain" description="WAP" evidence="3">
    <location>
        <begin position="3"/>
        <end position="47"/>
    </location>
</feature>
<feature type="disulfide bond" evidence="4 5 10">
    <location>
        <begin position="10"/>
        <end position="35"/>
    </location>
</feature>
<feature type="disulfide bond" evidence="4 5 10">
    <location>
        <begin position="18"/>
        <end position="39"/>
    </location>
</feature>
<feature type="disulfide bond" evidence="4 5 10">
    <location>
        <begin position="22"/>
        <end position="34"/>
    </location>
</feature>
<feature type="disulfide bond" evidence="4 5 10">
    <location>
        <begin position="28"/>
        <end position="43"/>
    </location>
</feature>
<feature type="strand" evidence="11">
    <location>
        <begin position="7"/>
        <end position="9"/>
    </location>
</feature>
<feature type="helix" evidence="11">
    <location>
        <begin position="25"/>
        <end position="27"/>
    </location>
</feature>
<feature type="strand" evidence="11">
    <location>
        <begin position="33"/>
        <end position="36"/>
    </location>
</feature>
<feature type="strand" evidence="11">
    <location>
        <begin position="41"/>
        <end position="44"/>
    </location>
</feature>
<dbReference type="PDB" id="3NGG">
    <property type="method" value="X-ray"/>
    <property type="resolution" value="1.33 A"/>
    <property type="chains" value="A/B=1-50"/>
</dbReference>
<dbReference type="PDBsum" id="3NGG"/>
<dbReference type="SMR" id="P83952"/>
<dbReference type="EvolutionaryTrace" id="P83952"/>
<dbReference type="GO" id="GO:0005576">
    <property type="term" value="C:extracellular region"/>
    <property type="evidence" value="ECO:0000314"/>
    <property type="project" value="UniProtKB"/>
</dbReference>
<dbReference type="GO" id="GO:0030414">
    <property type="term" value="F:peptidase inhibitor activity"/>
    <property type="evidence" value="ECO:0007669"/>
    <property type="project" value="InterPro"/>
</dbReference>
<dbReference type="GO" id="GO:0042742">
    <property type="term" value="P:defense response to bacterium"/>
    <property type="evidence" value="ECO:0007669"/>
    <property type="project" value="UniProtKB-KW"/>
</dbReference>
<dbReference type="GO" id="GO:0044278">
    <property type="term" value="P:venom-mediated disruption of cell wall in another organism"/>
    <property type="evidence" value="ECO:0000314"/>
    <property type="project" value="UniProtKB"/>
</dbReference>
<dbReference type="Gene3D" id="4.10.75.10">
    <property type="entry name" value="Elafin-like"/>
    <property type="match status" value="1"/>
</dbReference>
<dbReference type="InterPro" id="IPR036645">
    <property type="entry name" value="Elafin-like_sf"/>
</dbReference>
<dbReference type="InterPro" id="IPR008197">
    <property type="entry name" value="WAP_dom"/>
</dbReference>
<dbReference type="Pfam" id="PF00095">
    <property type="entry name" value="WAP"/>
    <property type="match status" value="1"/>
</dbReference>
<dbReference type="PRINTS" id="PR00003">
    <property type="entry name" value="4DISULPHCORE"/>
</dbReference>
<dbReference type="SMART" id="SM00217">
    <property type="entry name" value="WAP"/>
    <property type="match status" value="1"/>
</dbReference>
<dbReference type="SUPFAM" id="SSF57256">
    <property type="entry name" value="Elafin-like"/>
    <property type="match status" value="1"/>
</dbReference>
<dbReference type="PROSITE" id="PS51390">
    <property type="entry name" value="WAP"/>
    <property type="match status" value="1"/>
</dbReference>
<accession>P83952</accession>
<protein>
    <recommendedName>
        <fullName evidence="1">Omwaprin-a</fullName>
        <shortName evidence="6 7">Omwaprin</shortName>
    </recommendedName>
    <alternativeName>
        <fullName evidence="2">Oxywaprin-a</fullName>
    </alternativeName>
</protein>
<name>WAPA_OXYMI</name>